<dbReference type="EMBL" id="DS480405">
    <property type="protein sequence ID" value="EDO17396.1"/>
    <property type="molecule type" value="Genomic_DNA"/>
</dbReference>
<dbReference type="RefSeq" id="XP_001645254.1">
    <property type="nucleotide sequence ID" value="XM_001645204.1"/>
</dbReference>
<dbReference type="SMR" id="A7TK50"/>
<dbReference type="FunCoup" id="A7TK50">
    <property type="interactions" value="67"/>
</dbReference>
<dbReference type="STRING" id="436907.A7TK50"/>
<dbReference type="GeneID" id="5545614"/>
<dbReference type="KEGG" id="vpo:Kpol_1060p52"/>
<dbReference type="eggNOG" id="KOG1471">
    <property type="taxonomic scope" value="Eukaryota"/>
</dbReference>
<dbReference type="HOGENOM" id="CLU_045138_0_1_1"/>
<dbReference type="InParanoid" id="A7TK50"/>
<dbReference type="OMA" id="KRVVTWN"/>
<dbReference type="OrthoDB" id="75724at2759"/>
<dbReference type="PhylomeDB" id="A7TK50"/>
<dbReference type="Proteomes" id="UP000000267">
    <property type="component" value="Unassembled WGS sequence"/>
</dbReference>
<dbReference type="GO" id="GO:0032541">
    <property type="term" value="C:cortical endoplasmic reticulum"/>
    <property type="evidence" value="ECO:0007669"/>
    <property type="project" value="EnsemblFungi"/>
</dbReference>
<dbReference type="GO" id="GO:0005829">
    <property type="term" value="C:cytosol"/>
    <property type="evidence" value="ECO:0007669"/>
    <property type="project" value="EnsemblFungi"/>
</dbReference>
<dbReference type="GO" id="GO:0005789">
    <property type="term" value="C:endoplasmic reticulum membrane"/>
    <property type="evidence" value="ECO:0007669"/>
    <property type="project" value="UniProtKB-SubCell"/>
</dbReference>
<dbReference type="GO" id="GO:0005886">
    <property type="term" value="C:plasma membrane"/>
    <property type="evidence" value="ECO:0007669"/>
    <property type="project" value="EnsemblFungi"/>
</dbReference>
<dbReference type="GO" id="GO:0020037">
    <property type="term" value="F:heme binding"/>
    <property type="evidence" value="ECO:0007669"/>
    <property type="project" value="EnsemblFungi"/>
</dbReference>
<dbReference type="GO" id="GO:0046872">
    <property type="term" value="F:metal ion binding"/>
    <property type="evidence" value="ECO:0007669"/>
    <property type="project" value="UniProtKB-KW"/>
</dbReference>
<dbReference type="GO" id="GO:0008526">
    <property type="term" value="F:phosphatidylinositol transfer activity"/>
    <property type="evidence" value="ECO:0007669"/>
    <property type="project" value="EnsemblFungi"/>
</dbReference>
<dbReference type="GO" id="GO:0043001">
    <property type="term" value="P:Golgi to plasma membrane protein transport"/>
    <property type="evidence" value="ECO:0007669"/>
    <property type="project" value="EnsemblFungi"/>
</dbReference>
<dbReference type="GO" id="GO:0046488">
    <property type="term" value="P:phosphatidylinositol metabolic process"/>
    <property type="evidence" value="ECO:0007669"/>
    <property type="project" value="EnsemblFungi"/>
</dbReference>
<dbReference type="GO" id="GO:2000114">
    <property type="term" value="P:regulation of establishment of cell polarity"/>
    <property type="evidence" value="ECO:0007669"/>
    <property type="project" value="EnsemblFungi"/>
</dbReference>
<dbReference type="GO" id="GO:0017157">
    <property type="term" value="P:regulation of exocytosis"/>
    <property type="evidence" value="ECO:0007669"/>
    <property type="project" value="EnsemblFungi"/>
</dbReference>
<dbReference type="CDD" id="cd00170">
    <property type="entry name" value="SEC14"/>
    <property type="match status" value="1"/>
</dbReference>
<dbReference type="Gene3D" id="3.40.525.10">
    <property type="entry name" value="CRAL-TRIO lipid binding domain"/>
    <property type="match status" value="1"/>
</dbReference>
<dbReference type="InterPro" id="IPR001251">
    <property type="entry name" value="CRAL-TRIO_dom"/>
</dbReference>
<dbReference type="InterPro" id="IPR036865">
    <property type="entry name" value="CRAL-TRIO_dom_sf"/>
</dbReference>
<dbReference type="InterPro" id="IPR042938">
    <property type="entry name" value="Sfh5"/>
</dbReference>
<dbReference type="PANTHER" id="PTHR47669">
    <property type="entry name" value="PHOSPHATIDYLINOSITOL TRANSFER PROTEIN SFH5"/>
    <property type="match status" value="1"/>
</dbReference>
<dbReference type="PANTHER" id="PTHR47669:SF1">
    <property type="entry name" value="PHOSPHATIDYLINOSITOL TRANSFER PROTEIN SFH5"/>
    <property type="match status" value="1"/>
</dbReference>
<dbReference type="Pfam" id="PF00650">
    <property type="entry name" value="CRAL_TRIO"/>
    <property type="match status" value="1"/>
</dbReference>
<dbReference type="SMART" id="SM00516">
    <property type="entry name" value="SEC14"/>
    <property type="match status" value="1"/>
</dbReference>
<dbReference type="SUPFAM" id="SSF52087">
    <property type="entry name" value="CRAL/TRIO domain"/>
    <property type="match status" value="1"/>
</dbReference>
<dbReference type="PROSITE" id="PS50191">
    <property type="entry name" value="CRAL_TRIO"/>
    <property type="match status" value="1"/>
</dbReference>
<comment type="function">
    <text evidence="2">Non-classical phosphatidylinositol (PtdIns) transfer protein (PITP), which exhibits PtdIns-binding/transfer activity in the absence of detectable PtdCho-binding/transfer activity. Regulates PtdIns(4,5)P2 homeostasis at the plasma membrane. Heme-binding protein that may play a role in organic oxidant-induced stress responses.</text>
</comment>
<comment type="catalytic activity">
    <reaction evidence="2">
        <text>a 1,2-diacyl-sn-glycero-3-phospho-(1D-myo-inositol)(in) = a 1,2-diacyl-sn-glycero-3-phospho-(1D-myo-inositol)(out)</text>
        <dbReference type="Rhea" id="RHEA:38691"/>
        <dbReference type="ChEBI" id="CHEBI:57880"/>
    </reaction>
    <physiologicalReaction direction="left-to-right" evidence="2">
        <dbReference type="Rhea" id="RHEA:38692"/>
    </physiologicalReaction>
</comment>
<comment type="cofactor">
    <cofactor evidence="1">
        <name>heme b</name>
        <dbReference type="ChEBI" id="CHEBI:60344"/>
    </cofactor>
</comment>
<comment type="subcellular location">
    <subcellularLocation>
        <location evidence="2">Cytoplasm</location>
    </subcellularLocation>
    <subcellularLocation>
        <location evidence="2">Endoplasmic reticulum membrane</location>
        <topology evidence="2">Peripheral membrane protein</topology>
    </subcellularLocation>
    <subcellularLocation>
        <location evidence="2">Microsome membrane</location>
        <topology evidence="2">Peripheral membrane protein</topology>
    </subcellularLocation>
</comment>
<comment type="similarity">
    <text evidence="4">Belongs to the SFH5 family.</text>
</comment>
<proteinExistence type="inferred from homology"/>
<reference key="1">
    <citation type="journal article" date="2007" name="Proc. Natl. Acad. Sci. U.S.A.">
        <title>Independent sorting-out of thousands of duplicated gene pairs in two yeast species descended from a whole-genome duplication.</title>
        <authorList>
            <person name="Scannell D.R."/>
            <person name="Frank A.C."/>
            <person name="Conant G.C."/>
            <person name="Byrne K.P."/>
            <person name="Woolfit M."/>
            <person name="Wolfe K.H."/>
        </authorList>
    </citation>
    <scope>NUCLEOTIDE SEQUENCE [LARGE SCALE GENOMIC DNA]</scope>
    <source>
        <strain>ATCC 22028 / DSM 70294 / BCRC 21397 / CBS 2163 / NBRC 10782 / NRRL Y-8283 / UCD 57-17</strain>
    </source>
</reference>
<sequence>MNFSNDSEEKVFNEIFDQLPTLIKDKCSDYDELYGYKLNYNDSKEKLVEQYYDEDIAKALIFKICKAYQFDKTKIITSIVDILNWRKSFNPLSAAYKETHNEALQTVGLLTSYPDDEPNKRVVTWNLYGQIVKKKELFKDSSKFIRYRIGLMERGLRLLDFNNDANNYMTQVHDYKGVSMFRLDSEIKACTKQVIAIFQKYYPELLYAKYFVNVPSILSWMYDLMKSFIDEQTRKKFVVLNDGNKLGNYLKSCPSENYGGTDKKNNLQKQDVDTPRPTPYALYILESQANEDID</sequence>
<protein>
    <recommendedName>
        <fullName>Phosphatidylinositol transfer protein SFH5</fullName>
        <shortName>PITP SFH5</shortName>
    </recommendedName>
</protein>
<name>SFH5_VANPO</name>
<organism>
    <name type="scientific">Vanderwaltozyma polyspora (strain ATCC 22028 / DSM 70294 / BCRC 21397 / CBS 2163 / NBRC 10782 / NRRL Y-8283 / UCD 57-17)</name>
    <name type="common">Kluyveromyces polysporus</name>
    <dbReference type="NCBI Taxonomy" id="436907"/>
    <lineage>
        <taxon>Eukaryota</taxon>
        <taxon>Fungi</taxon>
        <taxon>Dikarya</taxon>
        <taxon>Ascomycota</taxon>
        <taxon>Saccharomycotina</taxon>
        <taxon>Saccharomycetes</taxon>
        <taxon>Saccharomycetales</taxon>
        <taxon>Saccharomycetaceae</taxon>
        <taxon>Vanderwaltozyma</taxon>
    </lineage>
</organism>
<evidence type="ECO:0000250" key="1">
    <source>
        <dbReference type="UniProtKB" id="A6ZQI5"/>
    </source>
</evidence>
<evidence type="ECO:0000250" key="2">
    <source>
        <dbReference type="UniProtKB" id="P47008"/>
    </source>
</evidence>
<evidence type="ECO:0000255" key="3">
    <source>
        <dbReference type="PROSITE-ProRule" id="PRU00056"/>
    </source>
</evidence>
<evidence type="ECO:0000305" key="4"/>
<accession>A7TK50</accession>
<keyword id="KW-0963">Cytoplasm</keyword>
<keyword id="KW-0256">Endoplasmic reticulum</keyword>
<keyword id="KW-0349">Heme</keyword>
<keyword id="KW-0408">Iron</keyword>
<keyword id="KW-0445">Lipid transport</keyword>
<keyword id="KW-0472">Membrane</keyword>
<keyword id="KW-0479">Metal-binding</keyword>
<keyword id="KW-0492">Microsome</keyword>
<keyword id="KW-1185">Reference proteome</keyword>
<keyword id="KW-0813">Transport</keyword>
<gene>
    <name type="primary">SFH5</name>
    <name type="ORF">Kpol_1060p52</name>
</gene>
<feature type="chain" id="PRO_0000324989" description="Phosphatidylinositol transfer protein SFH5">
    <location>
        <begin position="1"/>
        <end position="294"/>
    </location>
</feature>
<feature type="domain" description="CRAL-TRIO" evidence="3">
    <location>
        <begin position="97"/>
        <end position="266"/>
    </location>
</feature>
<feature type="binding site" evidence="1">
    <location>
        <position position="128"/>
    </location>
    <ligand>
        <name>heme</name>
        <dbReference type="ChEBI" id="CHEBI:30413"/>
    </ligand>
</feature>
<feature type="binding site" evidence="1">
    <location>
        <position position="148"/>
    </location>
    <ligand>
        <name>heme</name>
        <dbReference type="ChEBI" id="CHEBI:30413"/>
    </ligand>
</feature>
<feature type="binding site" evidence="1">
    <location>
        <position position="173"/>
    </location>
    <ligand>
        <name>heme</name>
        <dbReference type="ChEBI" id="CHEBI:30413"/>
    </ligand>
</feature>
<feature type="binding site" description="proximal binding residue" evidence="1">
    <location>
        <position position="175"/>
    </location>
    <ligand>
        <name>heme</name>
        <dbReference type="ChEBI" id="CHEBI:30413"/>
    </ligand>
    <ligandPart>
        <name>Fe</name>
        <dbReference type="ChEBI" id="CHEBI:18248"/>
    </ligandPart>
</feature>
<feature type="binding site" evidence="1">
    <location>
        <position position="209"/>
    </location>
    <ligand>
        <name>heme</name>
        <dbReference type="ChEBI" id="CHEBI:30413"/>
    </ligand>
</feature>